<organism>
    <name type="scientific">Clostridium botulinum (strain Eklund 17B / Type B)</name>
    <dbReference type="NCBI Taxonomy" id="935198"/>
    <lineage>
        <taxon>Bacteria</taxon>
        <taxon>Bacillati</taxon>
        <taxon>Bacillota</taxon>
        <taxon>Clostridia</taxon>
        <taxon>Eubacteriales</taxon>
        <taxon>Clostridiaceae</taxon>
        <taxon>Clostridium</taxon>
    </lineage>
</organism>
<accession>B2TM06</accession>
<dbReference type="EC" id="3.1.-.-" evidence="1"/>
<dbReference type="EMBL" id="CP001056">
    <property type="protein sequence ID" value="ACD23313.1"/>
    <property type="molecule type" value="Genomic_DNA"/>
</dbReference>
<dbReference type="SMR" id="B2TM06"/>
<dbReference type="KEGG" id="cbk:CLL_A0904"/>
<dbReference type="PATRIC" id="fig|935198.13.peg.854"/>
<dbReference type="HOGENOM" id="CLU_106710_3_0_9"/>
<dbReference type="Proteomes" id="UP000001195">
    <property type="component" value="Chromosome"/>
</dbReference>
<dbReference type="GO" id="GO:0005737">
    <property type="term" value="C:cytoplasm"/>
    <property type="evidence" value="ECO:0007669"/>
    <property type="project" value="UniProtKB-SubCell"/>
</dbReference>
<dbReference type="GO" id="GO:0004222">
    <property type="term" value="F:metalloendopeptidase activity"/>
    <property type="evidence" value="ECO:0007669"/>
    <property type="project" value="InterPro"/>
</dbReference>
<dbReference type="GO" id="GO:0004521">
    <property type="term" value="F:RNA endonuclease activity"/>
    <property type="evidence" value="ECO:0007669"/>
    <property type="project" value="UniProtKB-UniRule"/>
</dbReference>
<dbReference type="GO" id="GO:0008270">
    <property type="term" value="F:zinc ion binding"/>
    <property type="evidence" value="ECO:0007669"/>
    <property type="project" value="UniProtKB-UniRule"/>
</dbReference>
<dbReference type="GO" id="GO:0006364">
    <property type="term" value="P:rRNA processing"/>
    <property type="evidence" value="ECO:0007669"/>
    <property type="project" value="UniProtKB-UniRule"/>
</dbReference>
<dbReference type="Gene3D" id="3.40.390.30">
    <property type="entry name" value="Metalloproteases ('zincins'), catalytic domain"/>
    <property type="match status" value="1"/>
</dbReference>
<dbReference type="HAMAP" id="MF_00009">
    <property type="entry name" value="Endoribonucl_YbeY"/>
    <property type="match status" value="1"/>
</dbReference>
<dbReference type="InterPro" id="IPR023091">
    <property type="entry name" value="MetalPrtase_cat_dom_sf_prd"/>
</dbReference>
<dbReference type="InterPro" id="IPR002036">
    <property type="entry name" value="YbeY"/>
</dbReference>
<dbReference type="InterPro" id="IPR020549">
    <property type="entry name" value="YbeY_CS"/>
</dbReference>
<dbReference type="NCBIfam" id="TIGR00043">
    <property type="entry name" value="rRNA maturation RNase YbeY"/>
    <property type="match status" value="1"/>
</dbReference>
<dbReference type="PANTHER" id="PTHR46986">
    <property type="entry name" value="ENDORIBONUCLEASE YBEY, CHLOROPLASTIC"/>
    <property type="match status" value="1"/>
</dbReference>
<dbReference type="PANTHER" id="PTHR46986:SF1">
    <property type="entry name" value="ENDORIBONUCLEASE YBEY, CHLOROPLASTIC"/>
    <property type="match status" value="1"/>
</dbReference>
<dbReference type="Pfam" id="PF02130">
    <property type="entry name" value="YbeY"/>
    <property type="match status" value="1"/>
</dbReference>
<dbReference type="SUPFAM" id="SSF55486">
    <property type="entry name" value="Metalloproteases ('zincins'), catalytic domain"/>
    <property type="match status" value="1"/>
</dbReference>
<dbReference type="PROSITE" id="PS01306">
    <property type="entry name" value="UPF0054"/>
    <property type="match status" value="1"/>
</dbReference>
<proteinExistence type="inferred from homology"/>
<feature type="chain" id="PRO_1000089166" description="Endoribonuclease YbeY">
    <location>
        <begin position="1"/>
        <end position="166"/>
    </location>
</feature>
<feature type="binding site" evidence="1">
    <location>
        <position position="132"/>
    </location>
    <ligand>
        <name>Zn(2+)</name>
        <dbReference type="ChEBI" id="CHEBI:29105"/>
        <note>catalytic</note>
    </ligand>
</feature>
<feature type="binding site" evidence="1">
    <location>
        <position position="136"/>
    </location>
    <ligand>
        <name>Zn(2+)</name>
        <dbReference type="ChEBI" id="CHEBI:29105"/>
        <note>catalytic</note>
    </ligand>
</feature>
<feature type="binding site" evidence="1">
    <location>
        <position position="142"/>
    </location>
    <ligand>
        <name>Zn(2+)</name>
        <dbReference type="ChEBI" id="CHEBI:29105"/>
        <note>catalytic</note>
    </ligand>
</feature>
<comment type="function">
    <text evidence="1">Single strand-specific metallo-endoribonuclease involved in late-stage 70S ribosome quality control and in maturation of the 3' terminus of the 16S rRNA.</text>
</comment>
<comment type="cofactor">
    <cofactor evidence="1">
        <name>Zn(2+)</name>
        <dbReference type="ChEBI" id="CHEBI:29105"/>
    </cofactor>
    <text evidence="1">Binds 1 zinc ion.</text>
</comment>
<comment type="subcellular location">
    <subcellularLocation>
        <location evidence="1">Cytoplasm</location>
    </subcellularLocation>
</comment>
<comment type="similarity">
    <text evidence="1">Belongs to the endoribonuclease YbeY family.</text>
</comment>
<sequence>MIYVDNRQEKMEVSDEFTNHLEKVIEFALKEEGVNISSEISLLFVDNEEIREINNETRNIDRATDVLSFPMLDYPEKKVFKEVYTENDFSEADFDGDDLVLGDVVLSLERALEQSKEYNHSYEREASYLVVHSVLHLLGYDHMEEEDKVKMRKREEEILTALDIRR</sequence>
<name>YBEY_CLOBB</name>
<gene>
    <name evidence="1" type="primary">ybeY</name>
    <name type="ordered locus">CLL_A0904</name>
</gene>
<keyword id="KW-0963">Cytoplasm</keyword>
<keyword id="KW-0255">Endonuclease</keyword>
<keyword id="KW-0378">Hydrolase</keyword>
<keyword id="KW-0479">Metal-binding</keyword>
<keyword id="KW-0540">Nuclease</keyword>
<keyword id="KW-0690">Ribosome biogenesis</keyword>
<keyword id="KW-0698">rRNA processing</keyword>
<keyword id="KW-0862">Zinc</keyword>
<evidence type="ECO:0000255" key="1">
    <source>
        <dbReference type="HAMAP-Rule" id="MF_00009"/>
    </source>
</evidence>
<protein>
    <recommendedName>
        <fullName evidence="1">Endoribonuclease YbeY</fullName>
        <ecNumber evidence="1">3.1.-.-</ecNumber>
    </recommendedName>
</protein>
<reference key="1">
    <citation type="submission" date="2008-04" db="EMBL/GenBank/DDBJ databases">
        <title>Complete sequence of Clostridium botulinum strain Eklund.</title>
        <authorList>
            <person name="Brinkac L.M."/>
            <person name="Brown J.L."/>
            <person name="Bruce D."/>
            <person name="Detter C."/>
            <person name="Munk C."/>
            <person name="Smith L.A."/>
            <person name="Smith T.J."/>
            <person name="Sutton G."/>
            <person name="Brettin T.S."/>
        </authorList>
    </citation>
    <scope>NUCLEOTIDE SEQUENCE [LARGE SCALE GENOMIC DNA]</scope>
    <source>
        <strain>Eklund 17B / Type B</strain>
    </source>
</reference>